<keyword id="KW-1185">Reference proteome</keyword>
<keyword id="KW-0964">Secreted</keyword>
<keyword id="KW-0732">Signal</keyword>
<name>THI22_YEAST</name>
<organism>
    <name type="scientific">Saccharomyces cerevisiae (strain ATCC 204508 / S288c)</name>
    <name type="common">Baker's yeast</name>
    <dbReference type="NCBI Taxonomy" id="559292"/>
    <lineage>
        <taxon>Eukaryota</taxon>
        <taxon>Fungi</taxon>
        <taxon>Dikarya</taxon>
        <taxon>Ascomycota</taxon>
        <taxon>Saccharomycotina</taxon>
        <taxon>Saccharomycetes</taxon>
        <taxon>Saccharomycetales</taxon>
        <taxon>Saccharomycetaceae</taxon>
        <taxon>Saccharomyces</taxon>
    </lineage>
</organism>
<reference key="1">
    <citation type="journal article" date="1997" name="Nature">
        <title>The nucleotide sequence of Saccharomyces cerevisiae chromosome XVI.</title>
        <authorList>
            <person name="Bussey H."/>
            <person name="Storms R.K."/>
            <person name="Ahmed A."/>
            <person name="Albermann K."/>
            <person name="Allen E."/>
            <person name="Ansorge W."/>
            <person name="Araujo R."/>
            <person name="Aparicio A."/>
            <person name="Barrell B.G."/>
            <person name="Badcock K."/>
            <person name="Benes V."/>
            <person name="Botstein D."/>
            <person name="Bowman S."/>
            <person name="Brueckner M."/>
            <person name="Carpenter J."/>
            <person name="Cherry J.M."/>
            <person name="Chung E."/>
            <person name="Churcher C.M."/>
            <person name="Coster F."/>
            <person name="Davis K."/>
            <person name="Davis R.W."/>
            <person name="Dietrich F.S."/>
            <person name="Delius H."/>
            <person name="DiPaolo T."/>
            <person name="Dubois E."/>
            <person name="Duesterhoeft A."/>
            <person name="Duncan M."/>
            <person name="Floeth M."/>
            <person name="Fortin N."/>
            <person name="Friesen J.D."/>
            <person name="Fritz C."/>
            <person name="Goffeau A."/>
            <person name="Hall J."/>
            <person name="Hebling U."/>
            <person name="Heumann K."/>
            <person name="Hilbert H."/>
            <person name="Hillier L.W."/>
            <person name="Hunicke-Smith S."/>
            <person name="Hyman R.W."/>
            <person name="Johnston M."/>
            <person name="Kalman S."/>
            <person name="Kleine K."/>
            <person name="Komp C."/>
            <person name="Kurdi O."/>
            <person name="Lashkari D."/>
            <person name="Lew H."/>
            <person name="Lin A."/>
            <person name="Lin D."/>
            <person name="Louis E.J."/>
            <person name="Marathe R."/>
            <person name="Messenguy F."/>
            <person name="Mewes H.-W."/>
            <person name="Mirtipati S."/>
            <person name="Moestl D."/>
            <person name="Mueller-Auer S."/>
            <person name="Namath A."/>
            <person name="Nentwich U."/>
            <person name="Oefner P."/>
            <person name="Pearson D."/>
            <person name="Petel F.X."/>
            <person name="Pohl T.M."/>
            <person name="Purnelle B."/>
            <person name="Rajandream M.A."/>
            <person name="Rechmann S."/>
            <person name="Rieger M."/>
            <person name="Riles L."/>
            <person name="Roberts D."/>
            <person name="Schaefer M."/>
            <person name="Scharfe M."/>
            <person name="Scherens B."/>
            <person name="Schramm S."/>
            <person name="Schroeder M."/>
            <person name="Sdicu A.-M."/>
            <person name="Tettelin H."/>
            <person name="Urrestarazu L.A."/>
            <person name="Ushinsky S."/>
            <person name="Vierendeels F."/>
            <person name="Vissers S."/>
            <person name="Voss H."/>
            <person name="Walsh S.V."/>
            <person name="Wambutt R."/>
            <person name="Wang Y."/>
            <person name="Wedler E."/>
            <person name="Wedler H."/>
            <person name="Winnett E."/>
            <person name="Zhong W.-W."/>
            <person name="Zollner A."/>
            <person name="Vo D.H."/>
            <person name="Hani J."/>
        </authorList>
    </citation>
    <scope>NUCLEOTIDE SEQUENCE [LARGE SCALE GENOMIC DNA]</scope>
    <source>
        <strain>ATCC 204508 / S288c</strain>
    </source>
</reference>
<reference key="2">
    <citation type="journal article" date="2014" name="G3 (Bethesda)">
        <title>The reference genome sequence of Saccharomyces cerevisiae: Then and now.</title>
        <authorList>
            <person name="Engel S.R."/>
            <person name="Dietrich F.S."/>
            <person name="Fisk D.G."/>
            <person name="Binkley G."/>
            <person name="Balakrishnan R."/>
            <person name="Costanzo M.C."/>
            <person name="Dwight S.S."/>
            <person name="Hitz B.C."/>
            <person name="Karra K."/>
            <person name="Nash R.S."/>
            <person name="Weng S."/>
            <person name="Wong E.D."/>
            <person name="Lloyd P."/>
            <person name="Skrzypek M.S."/>
            <person name="Miyasato S.R."/>
            <person name="Simison M."/>
            <person name="Cherry J.M."/>
        </authorList>
    </citation>
    <scope>GENOME REANNOTATION</scope>
    <scope>SEQUENCE REVISION TO 95</scope>
    <source>
        <strain>ATCC 204508 / S288c</strain>
    </source>
</reference>
<reference key="3">
    <citation type="journal article" date="1999" name="Mol. Microbiol.">
        <title>Genetic redundancy and gene fusion in the genome of the Baker's yeast Saccharomyces cerevisiae: functional characterization of a three-member gene family involved in the thiamine biosynthetic pathway.</title>
        <authorList>
            <person name="Llorente B."/>
            <person name="Fairhead C."/>
            <person name="Dujon B."/>
        </authorList>
    </citation>
    <scope>FUNCTION</scope>
    <scope>INDUCTION</scope>
</reference>
<evidence type="ECO:0000255" key="1"/>
<evidence type="ECO:0000269" key="2">
    <source>
    </source>
</evidence>
<evidence type="ECO:0000305" key="3"/>
<sequence>MVIILLGLCTLGFPRTAFCPSIMTNSTVSINTPPPYLTLACNEKLPTVMSIAGSDSSGGAGVEADIKTITAHRCYAMTCVTTLTAQTPVKVYGAQNIPKKMVSQILDANLQDMKCNVIKTGMLTVDAIEVLHEKLLQLGENRPKLVIDPVLCAASDSSPTGKDVVSLIIEKISPFADILTPNISDCFMLLGENREVSKLQDVLEIAKDLSRITNCSNILVKGGHIPCDDGKEKHITDVLYLGAEQKFITFKGQFVNTTRTHGAGCTLASAIASNLARGYSLSQSVYGGIEYVQNAIAIGCDVTKKAVKVGPINHVYAVEIPLEKMLTDECFTASDAVPKKPIEGSLDKIPGGSFFNYLINHPKVKPHWDAYVNHEFVKRVADGTLERKKFQFFIEQDYLYLIDYVRVCCVTGSKSPTLEDLEKDLVIADCARNELNEHERRLREEFGVKDPDYLQKIKRGPALRAYCRYLIDISRRGNWQEIVVALNPCLMGYVYAVDKVKDKITAAEGSIYSEWCDTCASSFCYQAVLEGERLMNHILETYPPDQLDSLVTIFARGCELETNFWTAAMEYE</sequence>
<proteinExistence type="evidence at transcript level"/>
<gene>
    <name type="primary">THI22</name>
    <name type="ordered locus">YPR121W</name>
</gene>
<protein>
    <recommendedName>
        <fullName>Thiamine biosynthesis protein THI22</fullName>
    </recommendedName>
</protein>
<accession>Q06490</accession>
<accession>D6W4C0</accession>
<feature type="signal peptide" evidence="1">
    <location>
        <begin position="1"/>
        <end position="19"/>
    </location>
</feature>
<feature type="chain" id="PRO_0000034064" description="Thiamine biosynthesis protein THI22">
    <location>
        <begin position="20"/>
        <end position="572"/>
    </location>
</feature>
<feature type="sequence conflict" description="In Ref. 1; AAB68062." evidence="3" ref="1">
    <original>Q</original>
    <variation>H</variation>
    <location>
        <position position="95"/>
    </location>
</feature>
<dbReference type="EMBL" id="U40828">
    <property type="protein sequence ID" value="AAB68062.1"/>
    <property type="molecule type" value="Genomic_DNA"/>
</dbReference>
<dbReference type="EMBL" id="BK006949">
    <property type="protein sequence ID" value="DAA11536.2"/>
    <property type="molecule type" value="Genomic_DNA"/>
</dbReference>
<dbReference type="PIR" id="S69014">
    <property type="entry name" value="S69014"/>
</dbReference>
<dbReference type="RefSeq" id="NP_015446.2">
    <property type="nucleotide sequence ID" value="NM_001184218.2"/>
</dbReference>
<dbReference type="SMR" id="Q06490"/>
<dbReference type="BioGRID" id="36290">
    <property type="interactions" value="102"/>
</dbReference>
<dbReference type="DIP" id="DIP-6441N"/>
<dbReference type="FunCoup" id="Q06490">
    <property type="interactions" value="216"/>
</dbReference>
<dbReference type="IntAct" id="Q06490">
    <property type="interactions" value="8"/>
</dbReference>
<dbReference type="MINT" id="Q06490"/>
<dbReference type="STRING" id="4932.YPR121W"/>
<dbReference type="PaxDb" id="4932-YPR121W"/>
<dbReference type="PeptideAtlas" id="Q06490"/>
<dbReference type="EnsemblFungi" id="YPR121W_mRNA">
    <property type="protein sequence ID" value="YPR121W"/>
    <property type="gene ID" value="YPR121W"/>
</dbReference>
<dbReference type="GeneID" id="856239"/>
<dbReference type="KEGG" id="sce:YPR121W"/>
<dbReference type="AGR" id="SGD:S000006325"/>
<dbReference type="SGD" id="S000006325">
    <property type="gene designation" value="THI22"/>
</dbReference>
<dbReference type="VEuPathDB" id="FungiDB:YPR121W"/>
<dbReference type="eggNOG" id="KOG2598">
    <property type="taxonomic scope" value="Eukaryota"/>
</dbReference>
<dbReference type="GeneTree" id="ENSGT00940000176386"/>
<dbReference type="HOGENOM" id="CLU_020520_2_1_1"/>
<dbReference type="InParanoid" id="Q06490"/>
<dbReference type="OMA" id="ADCARNE"/>
<dbReference type="OrthoDB" id="10028886at2759"/>
<dbReference type="BioCyc" id="YEAST:G3O-34260-MONOMER"/>
<dbReference type="BioGRID-ORCS" id="856239">
    <property type="hits" value="0 hits in 10 CRISPR screens"/>
</dbReference>
<dbReference type="PRO" id="PR:Q06490"/>
<dbReference type="Proteomes" id="UP000002311">
    <property type="component" value="Chromosome XVI"/>
</dbReference>
<dbReference type="RNAct" id="Q06490">
    <property type="molecule type" value="protein"/>
</dbReference>
<dbReference type="GO" id="GO:0005829">
    <property type="term" value="C:cytosol"/>
    <property type="evidence" value="ECO:0000318"/>
    <property type="project" value="GO_Central"/>
</dbReference>
<dbReference type="GO" id="GO:0005576">
    <property type="term" value="C:extracellular region"/>
    <property type="evidence" value="ECO:0007669"/>
    <property type="project" value="UniProtKB-SubCell"/>
</dbReference>
<dbReference type="GO" id="GO:0008902">
    <property type="term" value="F:hydroxymethylpyrimidine kinase activity"/>
    <property type="evidence" value="ECO:0000318"/>
    <property type="project" value="GO_Central"/>
</dbReference>
<dbReference type="GO" id="GO:0008972">
    <property type="term" value="F:phosphomethylpyrimidine kinase activity"/>
    <property type="evidence" value="ECO:0000318"/>
    <property type="project" value="GO_Central"/>
</dbReference>
<dbReference type="GO" id="GO:0050334">
    <property type="term" value="F:thiaminase activity"/>
    <property type="evidence" value="ECO:0007669"/>
    <property type="project" value="InterPro"/>
</dbReference>
<dbReference type="GO" id="GO:0009228">
    <property type="term" value="P:thiamine biosynthetic process"/>
    <property type="evidence" value="ECO:0000270"/>
    <property type="project" value="SGD"/>
</dbReference>
<dbReference type="CDD" id="cd01169">
    <property type="entry name" value="HMPP_kinase"/>
    <property type="match status" value="1"/>
</dbReference>
<dbReference type="CDD" id="cd19367">
    <property type="entry name" value="TenA_C_ScTHI20-like"/>
    <property type="match status" value="1"/>
</dbReference>
<dbReference type="FunFam" id="1.20.910.10:FF:000003">
    <property type="entry name" value="Hydroxymethylpyrimidine/phosphomethylpyrimidine kinase THI20"/>
    <property type="match status" value="1"/>
</dbReference>
<dbReference type="FunFam" id="3.40.1190.20:FF:000038">
    <property type="entry name" value="Hydroxymethylpyrimidine/phosphomethylpyrimidine kinase THI20"/>
    <property type="match status" value="1"/>
</dbReference>
<dbReference type="Gene3D" id="3.40.1190.20">
    <property type="match status" value="1"/>
</dbReference>
<dbReference type="Gene3D" id="1.20.910.10">
    <property type="entry name" value="Heme oxygenase-like"/>
    <property type="match status" value="1"/>
</dbReference>
<dbReference type="InterPro" id="IPR016084">
    <property type="entry name" value="Haem_Oase-like_multi-hlx"/>
</dbReference>
<dbReference type="InterPro" id="IPR004399">
    <property type="entry name" value="HMP/HMP-P_kinase_dom"/>
</dbReference>
<dbReference type="InterPro" id="IPR013749">
    <property type="entry name" value="PM/HMP-P_kinase-1"/>
</dbReference>
<dbReference type="InterPro" id="IPR029056">
    <property type="entry name" value="Ribokinase-like"/>
</dbReference>
<dbReference type="InterPro" id="IPR004305">
    <property type="entry name" value="Thiaminase-2/PQQC"/>
</dbReference>
<dbReference type="InterPro" id="IPR027574">
    <property type="entry name" value="Thiaminase_II"/>
</dbReference>
<dbReference type="NCBIfam" id="TIGR00097">
    <property type="entry name" value="HMP-P_kinase"/>
    <property type="match status" value="1"/>
</dbReference>
<dbReference type="NCBIfam" id="TIGR04306">
    <property type="entry name" value="salvage_TenA"/>
    <property type="match status" value="1"/>
</dbReference>
<dbReference type="PANTHER" id="PTHR20858:SF17">
    <property type="entry name" value="HYDROXYMETHYLPYRIMIDINE_PHOSPHOMETHYLPYRIMIDINE KINASE THI20-RELATED"/>
    <property type="match status" value="1"/>
</dbReference>
<dbReference type="PANTHER" id="PTHR20858">
    <property type="entry name" value="PHOSPHOMETHYLPYRIMIDINE KINASE"/>
    <property type="match status" value="1"/>
</dbReference>
<dbReference type="Pfam" id="PF08543">
    <property type="entry name" value="Phos_pyr_kin"/>
    <property type="match status" value="1"/>
</dbReference>
<dbReference type="Pfam" id="PF03070">
    <property type="entry name" value="TENA_THI-4"/>
    <property type="match status" value="1"/>
</dbReference>
<dbReference type="SUPFAM" id="SSF48613">
    <property type="entry name" value="Heme oxygenase-like"/>
    <property type="match status" value="1"/>
</dbReference>
<dbReference type="SUPFAM" id="SSF53613">
    <property type="entry name" value="Ribokinase-like"/>
    <property type="match status" value="1"/>
</dbReference>
<comment type="function">
    <text evidence="2">Is not required for thiamine biosynthesis.</text>
</comment>
<comment type="subcellular location">
    <subcellularLocation>
        <location evidence="3">Secreted</location>
    </subcellularLocation>
</comment>
<comment type="induction">
    <text evidence="2">By absence of thiamine.</text>
</comment>
<comment type="similarity">
    <text evidence="3">Belongs to the thiaminase-2 family.</text>
</comment>
<comment type="caution">
    <text evidence="3">Although highly homologous to the 2 other thiaminase-2 family members THI20 and THI21 in yeast, no hydroxymethylpyrimidine phosphate kinase activity could be demonstrated for this protein.</text>
</comment>